<accession>A3QGV8</accession>
<organism>
    <name type="scientific">Shewanella loihica (strain ATCC BAA-1088 / PV-4)</name>
    <dbReference type="NCBI Taxonomy" id="323850"/>
    <lineage>
        <taxon>Bacteria</taxon>
        <taxon>Pseudomonadati</taxon>
        <taxon>Pseudomonadota</taxon>
        <taxon>Gammaproteobacteria</taxon>
        <taxon>Alteromonadales</taxon>
        <taxon>Shewanellaceae</taxon>
        <taxon>Shewanella</taxon>
    </lineage>
</organism>
<reference key="1">
    <citation type="submission" date="2007-03" db="EMBL/GenBank/DDBJ databases">
        <title>Complete sequence of Shewanella loihica PV-4.</title>
        <authorList>
            <consortium name="US DOE Joint Genome Institute"/>
            <person name="Copeland A."/>
            <person name="Lucas S."/>
            <person name="Lapidus A."/>
            <person name="Barry K."/>
            <person name="Detter J.C."/>
            <person name="Glavina del Rio T."/>
            <person name="Hammon N."/>
            <person name="Israni S."/>
            <person name="Dalin E."/>
            <person name="Tice H."/>
            <person name="Pitluck S."/>
            <person name="Chain P."/>
            <person name="Malfatti S."/>
            <person name="Shin M."/>
            <person name="Vergez L."/>
            <person name="Schmutz J."/>
            <person name="Larimer F."/>
            <person name="Land M."/>
            <person name="Hauser L."/>
            <person name="Kyrpides N."/>
            <person name="Mikhailova N."/>
            <person name="Romine M.F."/>
            <person name="Serres G."/>
            <person name="Fredrickson J."/>
            <person name="Tiedje J."/>
            <person name="Richardson P."/>
        </authorList>
    </citation>
    <scope>NUCLEOTIDE SEQUENCE [LARGE SCALE GENOMIC DNA]</scope>
    <source>
        <strain>ATCC BAA-1088 / PV-4</strain>
    </source>
</reference>
<feature type="chain" id="PRO_1000008636" description="4-hydroxy-tetrahydrodipicolinate reductase">
    <location>
        <begin position="1"/>
        <end position="271"/>
    </location>
</feature>
<feature type="active site" description="Proton donor/acceptor" evidence="1">
    <location>
        <position position="158"/>
    </location>
</feature>
<feature type="active site" description="Proton donor" evidence="1">
    <location>
        <position position="162"/>
    </location>
</feature>
<feature type="binding site" evidence="1">
    <location>
        <begin position="11"/>
        <end position="16"/>
    </location>
    <ligand>
        <name>NAD(+)</name>
        <dbReference type="ChEBI" id="CHEBI:57540"/>
    </ligand>
</feature>
<feature type="binding site" evidence="1">
    <location>
        <position position="37"/>
    </location>
    <ligand>
        <name>NAD(+)</name>
        <dbReference type="ChEBI" id="CHEBI:57540"/>
    </ligand>
</feature>
<feature type="binding site" evidence="1">
    <location>
        <position position="38"/>
    </location>
    <ligand>
        <name>NADP(+)</name>
        <dbReference type="ChEBI" id="CHEBI:58349"/>
    </ligand>
</feature>
<feature type="binding site" evidence="1">
    <location>
        <begin position="101"/>
        <end position="103"/>
    </location>
    <ligand>
        <name>NAD(+)</name>
        <dbReference type="ChEBI" id="CHEBI:57540"/>
    </ligand>
</feature>
<feature type="binding site" evidence="1">
    <location>
        <begin position="125"/>
        <end position="128"/>
    </location>
    <ligand>
        <name>NAD(+)</name>
        <dbReference type="ChEBI" id="CHEBI:57540"/>
    </ligand>
</feature>
<feature type="binding site" evidence="1">
    <location>
        <position position="159"/>
    </location>
    <ligand>
        <name>(S)-2,3,4,5-tetrahydrodipicolinate</name>
        <dbReference type="ChEBI" id="CHEBI:16845"/>
    </ligand>
</feature>
<feature type="binding site" evidence="1">
    <location>
        <begin position="168"/>
        <end position="169"/>
    </location>
    <ligand>
        <name>(S)-2,3,4,5-tetrahydrodipicolinate</name>
        <dbReference type="ChEBI" id="CHEBI:16845"/>
    </ligand>
</feature>
<comment type="function">
    <text evidence="1">Catalyzes the conversion of 4-hydroxy-tetrahydrodipicolinate (HTPA) to tetrahydrodipicolinate.</text>
</comment>
<comment type="catalytic activity">
    <reaction evidence="1">
        <text>(S)-2,3,4,5-tetrahydrodipicolinate + NAD(+) + H2O = (2S,4S)-4-hydroxy-2,3,4,5-tetrahydrodipicolinate + NADH + H(+)</text>
        <dbReference type="Rhea" id="RHEA:35323"/>
        <dbReference type="ChEBI" id="CHEBI:15377"/>
        <dbReference type="ChEBI" id="CHEBI:15378"/>
        <dbReference type="ChEBI" id="CHEBI:16845"/>
        <dbReference type="ChEBI" id="CHEBI:57540"/>
        <dbReference type="ChEBI" id="CHEBI:57945"/>
        <dbReference type="ChEBI" id="CHEBI:67139"/>
        <dbReference type="EC" id="1.17.1.8"/>
    </reaction>
</comment>
<comment type="catalytic activity">
    <reaction evidence="1">
        <text>(S)-2,3,4,5-tetrahydrodipicolinate + NADP(+) + H2O = (2S,4S)-4-hydroxy-2,3,4,5-tetrahydrodipicolinate + NADPH + H(+)</text>
        <dbReference type="Rhea" id="RHEA:35331"/>
        <dbReference type="ChEBI" id="CHEBI:15377"/>
        <dbReference type="ChEBI" id="CHEBI:15378"/>
        <dbReference type="ChEBI" id="CHEBI:16845"/>
        <dbReference type="ChEBI" id="CHEBI:57783"/>
        <dbReference type="ChEBI" id="CHEBI:58349"/>
        <dbReference type="ChEBI" id="CHEBI:67139"/>
        <dbReference type="EC" id="1.17.1.8"/>
    </reaction>
</comment>
<comment type="pathway">
    <text evidence="1">Amino-acid biosynthesis; L-lysine biosynthesis via DAP pathway; (S)-tetrahydrodipicolinate from L-aspartate: step 4/4.</text>
</comment>
<comment type="subcellular location">
    <subcellularLocation>
        <location evidence="1">Cytoplasm</location>
    </subcellularLocation>
</comment>
<comment type="similarity">
    <text evidence="1">Belongs to the DapB family.</text>
</comment>
<comment type="caution">
    <text evidence="2">Was originally thought to be a dihydrodipicolinate reductase (DHDPR), catalyzing the conversion of dihydrodipicolinate to tetrahydrodipicolinate. However, it was shown in E.coli that the substrate of the enzymatic reaction is not dihydrodipicolinate (DHDP) but in fact (2S,4S)-4-hydroxy-2,3,4,5-tetrahydrodipicolinic acid (HTPA), the product released by the DapA-catalyzed reaction.</text>
</comment>
<sequence length="271" mass="29060">MTEQVRVAITGGSGRMGRTLIESAKLSSNIYLGAAVERAGSTLIGVDAGELAGVGAMNVAITDSLDNAVDDFDILIDFTSPEASVVHTDWCSRNGKAIVIGTTGFNHAQKEQIAAYAENTPIVMAPNMSVGVNLMWRLLELAAEVMGDYTDIEIIEGHHRHKKDAPSGTALKMGEVIAEVLGRDLEKCAVYGREGITEERSRETIGFSTIRAGDLVGEHTAMFADIGERLEITHKASSRMTFANGAMRAAFWLGDQGPGLYDMQQVLGLKD</sequence>
<gene>
    <name evidence="1" type="primary">dapB</name>
    <name type="ordered locus">Shew_2840</name>
</gene>
<name>DAPB_SHELP</name>
<keyword id="KW-0028">Amino-acid biosynthesis</keyword>
<keyword id="KW-0963">Cytoplasm</keyword>
<keyword id="KW-0220">Diaminopimelate biosynthesis</keyword>
<keyword id="KW-0457">Lysine biosynthesis</keyword>
<keyword id="KW-0520">NAD</keyword>
<keyword id="KW-0521">NADP</keyword>
<keyword id="KW-0560">Oxidoreductase</keyword>
<keyword id="KW-1185">Reference proteome</keyword>
<evidence type="ECO:0000255" key="1">
    <source>
        <dbReference type="HAMAP-Rule" id="MF_00102"/>
    </source>
</evidence>
<evidence type="ECO:0000305" key="2"/>
<protein>
    <recommendedName>
        <fullName evidence="1">4-hydroxy-tetrahydrodipicolinate reductase</fullName>
        <shortName evidence="1">HTPA reductase</shortName>
        <ecNumber evidence="1">1.17.1.8</ecNumber>
    </recommendedName>
</protein>
<proteinExistence type="inferred from homology"/>
<dbReference type="EC" id="1.17.1.8" evidence="1"/>
<dbReference type="EMBL" id="CP000606">
    <property type="protein sequence ID" value="ABO24706.1"/>
    <property type="molecule type" value="Genomic_DNA"/>
</dbReference>
<dbReference type="RefSeq" id="WP_011866637.1">
    <property type="nucleotide sequence ID" value="NC_009092.1"/>
</dbReference>
<dbReference type="SMR" id="A3QGV8"/>
<dbReference type="STRING" id="323850.Shew_2840"/>
<dbReference type="KEGG" id="slo:Shew_2840"/>
<dbReference type="eggNOG" id="COG0289">
    <property type="taxonomic scope" value="Bacteria"/>
</dbReference>
<dbReference type="HOGENOM" id="CLU_047479_2_1_6"/>
<dbReference type="OrthoDB" id="9790352at2"/>
<dbReference type="UniPathway" id="UPA00034">
    <property type="reaction ID" value="UER00018"/>
</dbReference>
<dbReference type="Proteomes" id="UP000001558">
    <property type="component" value="Chromosome"/>
</dbReference>
<dbReference type="GO" id="GO:0005829">
    <property type="term" value="C:cytosol"/>
    <property type="evidence" value="ECO:0007669"/>
    <property type="project" value="TreeGrafter"/>
</dbReference>
<dbReference type="GO" id="GO:0008839">
    <property type="term" value="F:4-hydroxy-tetrahydrodipicolinate reductase"/>
    <property type="evidence" value="ECO:0007669"/>
    <property type="project" value="UniProtKB-EC"/>
</dbReference>
<dbReference type="GO" id="GO:0051287">
    <property type="term" value="F:NAD binding"/>
    <property type="evidence" value="ECO:0007669"/>
    <property type="project" value="UniProtKB-UniRule"/>
</dbReference>
<dbReference type="GO" id="GO:0050661">
    <property type="term" value="F:NADP binding"/>
    <property type="evidence" value="ECO:0007669"/>
    <property type="project" value="UniProtKB-UniRule"/>
</dbReference>
<dbReference type="GO" id="GO:0016726">
    <property type="term" value="F:oxidoreductase activity, acting on CH or CH2 groups, NAD or NADP as acceptor"/>
    <property type="evidence" value="ECO:0007669"/>
    <property type="project" value="UniProtKB-UniRule"/>
</dbReference>
<dbReference type="GO" id="GO:0019877">
    <property type="term" value="P:diaminopimelate biosynthetic process"/>
    <property type="evidence" value="ECO:0007669"/>
    <property type="project" value="UniProtKB-UniRule"/>
</dbReference>
<dbReference type="GO" id="GO:0009089">
    <property type="term" value="P:lysine biosynthetic process via diaminopimelate"/>
    <property type="evidence" value="ECO:0007669"/>
    <property type="project" value="UniProtKB-UniRule"/>
</dbReference>
<dbReference type="CDD" id="cd02274">
    <property type="entry name" value="DHDPR_N"/>
    <property type="match status" value="1"/>
</dbReference>
<dbReference type="FunFam" id="3.30.360.10:FF:000004">
    <property type="entry name" value="4-hydroxy-tetrahydrodipicolinate reductase"/>
    <property type="match status" value="1"/>
</dbReference>
<dbReference type="FunFam" id="3.40.50.720:FF:000048">
    <property type="entry name" value="4-hydroxy-tetrahydrodipicolinate reductase"/>
    <property type="match status" value="1"/>
</dbReference>
<dbReference type="Gene3D" id="3.30.360.10">
    <property type="entry name" value="Dihydrodipicolinate Reductase, domain 2"/>
    <property type="match status" value="1"/>
</dbReference>
<dbReference type="Gene3D" id="3.40.50.720">
    <property type="entry name" value="NAD(P)-binding Rossmann-like Domain"/>
    <property type="match status" value="1"/>
</dbReference>
<dbReference type="HAMAP" id="MF_00102">
    <property type="entry name" value="DapB"/>
    <property type="match status" value="1"/>
</dbReference>
<dbReference type="InterPro" id="IPR022663">
    <property type="entry name" value="DapB_C"/>
</dbReference>
<dbReference type="InterPro" id="IPR000846">
    <property type="entry name" value="DapB_N"/>
</dbReference>
<dbReference type="InterPro" id="IPR022664">
    <property type="entry name" value="DapB_N_CS"/>
</dbReference>
<dbReference type="InterPro" id="IPR023940">
    <property type="entry name" value="DHDPR_bac"/>
</dbReference>
<dbReference type="InterPro" id="IPR036291">
    <property type="entry name" value="NAD(P)-bd_dom_sf"/>
</dbReference>
<dbReference type="NCBIfam" id="TIGR00036">
    <property type="entry name" value="dapB"/>
    <property type="match status" value="1"/>
</dbReference>
<dbReference type="PANTHER" id="PTHR20836:SF0">
    <property type="entry name" value="4-HYDROXY-TETRAHYDRODIPICOLINATE REDUCTASE 1, CHLOROPLASTIC-RELATED"/>
    <property type="match status" value="1"/>
</dbReference>
<dbReference type="PANTHER" id="PTHR20836">
    <property type="entry name" value="DIHYDRODIPICOLINATE REDUCTASE"/>
    <property type="match status" value="1"/>
</dbReference>
<dbReference type="Pfam" id="PF05173">
    <property type="entry name" value="DapB_C"/>
    <property type="match status" value="1"/>
</dbReference>
<dbReference type="Pfam" id="PF01113">
    <property type="entry name" value="DapB_N"/>
    <property type="match status" value="1"/>
</dbReference>
<dbReference type="PIRSF" id="PIRSF000161">
    <property type="entry name" value="DHPR"/>
    <property type="match status" value="1"/>
</dbReference>
<dbReference type="SUPFAM" id="SSF55347">
    <property type="entry name" value="Glyceraldehyde-3-phosphate dehydrogenase-like, C-terminal domain"/>
    <property type="match status" value="1"/>
</dbReference>
<dbReference type="SUPFAM" id="SSF51735">
    <property type="entry name" value="NAD(P)-binding Rossmann-fold domains"/>
    <property type="match status" value="1"/>
</dbReference>
<dbReference type="PROSITE" id="PS01298">
    <property type="entry name" value="DAPB"/>
    <property type="match status" value="1"/>
</dbReference>